<accession>A4SV43</accession>
<feature type="chain" id="PRO_1000075507" description="Peptide chain release factor 1">
    <location>
        <begin position="1"/>
        <end position="359"/>
    </location>
</feature>
<feature type="modified residue" description="N5-methylglutamine" evidence="1">
    <location>
        <position position="235"/>
    </location>
</feature>
<comment type="function">
    <text evidence="1">Peptide chain release factor 1 directs the termination of translation in response to the peptide chain termination codons UAG and UAA.</text>
</comment>
<comment type="subcellular location">
    <subcellularLocation>
        <location evidence="1">Cytoplasm</location>
    </subcellularLocation>
</comment>
<comment type="PTM">
    <text evidence="1">Methylated by PrmC. Methylation increases the termination efficiency of RF1.</text>
</comment>
<comment type="similarity">
    <text evidence="1">Belongs to the prokaryotic/mitochondrial release factor family.</text>
</comment>
<sequence length="359" mass="40284">MKPSMRAKLDHLDTRLAELNSLLTSEEATKDMDAYRKLTREHSDIATVVEQFGLYKKAEADAQAAEEMRKDPEMKDFADEEQKQAQATMEELEGALQKLLLPKDVNDERNVFLEIRAGTGGDESALFAGDLLRMYTRFAERQGWKVEVVNAAESDLGGYKEVVLRLVGQSVYSRLKFESGGHRVQRVPQTETQGRIHTSACTVAVMPEADELEAVKINPAELRIDTFRASGAGGQHINKTDSAVRITHIPTGTVVECQDDRSQHRNREQAMKVLVSRIMDAREREKHQLEAQTRKSLIGSGDRSDRIRTYNFPQGRITDHRINLTLYKIDAMMDGDIDDLCNALASEHQAELLAALGDS</sequence>
<organism>
    <name type="scientific">Polynucleobacter asymbioticus (strain DSM 18221 / CIP 109841 / QLW-P1DMWA-1)</name>
    <name type="common">Polynucleobacter necessarius subsp. asymbioticus</name>
    <dbReference type="NCBI Taxonomy" id="312153"/>
    <lineage>
        <taxon>Bacteria</taxon>
        <taxon>Pseudomonadati</taxon>
        <taxon>Pseudomonadota</taxon>
        <taxon>Betaproteobacteria</taxon>
        <taxon>Burkholderiales</taxon>
        <taxon>Burkholderiaceae</taxon>
        <taxon>Polynucleobacter</taxon>
    </lineage>
</organism>
<reference key="1">
    <citation type="journal article" date="2012" name="Stand. Genomic Sci.">
        <title>Complete genome sequence of Polynucleobacter necessarius subsp. asymbioticus type strain (QLW-P1DMWA-1(T)).</title>
        <authorList>
            <person name="Meincke L."/>
            <person name="Copeland A."/>
            <person name="Lapidus A."/>
            <person name="Lucas S."/>
            <person name="Berry K.W."/>
            <person name="Del Rio T.G."/>
            <person name="Hammon N."/>
            <person name="Dalin E."/>
            <person name="Tice H."/>
            <person name="Pitluck S."/>
            <person name="Richardson P."/>
            <person name="Bruce D."/>
            <person name="Goodwin L."/>
            <person name="Han C."/>
            <person name="Tapia R."/>
            <person name="Detter J.C."/>
            <person name="Schmutz J."/>
            <person name="Brettin T."/>
            <person name="Larimer F."/>
            <person name="Land M."/>
            <person name="Hauser L."/>
            <person name="Kyrpides N.C."/>
            <person name="Ivanova N."/>
            <person name="Goker M."/>
            <person name="Woyke T."/>
            <person name="Wu Q.L."/>
            <person name="Pockl M."/>
            <person name="Hahn M.W."/>
            <person name="Klenk H.P."/>
        </authorList>
    </citation>
    <scope>NUCLEOTIDE SEQUENCE [LARGE SCALE GENOMIC DNA]</scope>
    <source>
        <strain>DSM 18221 / CIP 109841 / QLW-P1DMWA-1</strain>
    </source>
</reference>
<proteinExistence type="inferred from homology"/>
<dbReference type="EMBL" id="CP000655">
    <property type="protein sequence ID" value="ABP33357.1"/>
    <property type="molecule type" value="Genomic_DNA"/>
</dbReference>
<dbReference type="RefSeq" id="WP_011901982.1">
    <property type="nucleotide sequence ID" value="NC_009379.1"/>
</dbReference>
<dbReference type="SMR" id="A4SV43"/>
<dbReference type="GeneID" id="31480484"/>
<dbReference type="KEGG" id="pnu:Pnuc_0136"/>
<dbReference type="eggNOG" id="COG0216">
    <property type="taxonomic scope" value="Bacteria"/>
</dbReference>
<dbReference type="HOGENOM" id="CLU_036856_0_1_4"/>
<dbReference type="Proteomes" id="UP000000231">
    <property type="component" value="Chromosome"/>
</dbReference>
<dbReference type="GO" id="GO:0005737">
    <property type="term" value="C:cytoplasm"/>
    <property type="evidence" value="ECO:0007669"/>
    <property type="project" value="UniProtKB-SubCell"/>
</dbReference>
<dbReference type="GO" id="GO:0016149">
    <property type="term" value="F:translation release factor activity, codon specific"/>
    <property type="evidence" value="ECO:0007669"/>
    <property type="project" value="UniProtKB-UniRule"/>
</dbReference>
<dbReference type="FunFam" id="3.30.160.20:FF:000004">
    <property type="entry name" value="Peptide chain release factor 1"/>
    <property type="match status" value="1"/>
</dbReference>
<dbReference type="FunFam" id="3.30.70.1660:FF:000002">
    <property type="entry name" value="Peptide chain release factor 1"/>
    <property type="match status" value="1"/>
</dbReference>
<dbReference type="FunFam" id="3.30.70.1660:FF:000004">
    <property type="entry name" value="Peptide chain release factor 1"/>
    <property type="match status" value="1"/>
</dbReference>
<dbReference type="Gene3D" id="3.30.160.20">
    <property type="match status" value="1"/>
</dbReference>
<dbReference type="Gene3D" id="3.30.70.1660">
    <property type="match status" value="1"/>
</dbReference>
<dbReference type="Gene3D" id="6.10.140.1950">
    <property type="match status" value="1"/>
</dbReference>
<dbReference type="HAMAP" id="MF_00093">
    <property type="entry name" value="Rel_fac_1"/>
    <property type="match status" value="1"/>
</dbReference>
<dbReference type="InterPro" id="IPR005139">
    <property type="entry name" value="PCRF"/>
</dbReference>
<dbReference type="InterPro" id="IPR000352">
    <property type="entry name" value="Pep_chain_release_fac_I"/>
</dbReference>
<dbReference type="InterPro" id="IPR045853">
    <property type="entry name" value="Pep_chain_release_fac_I_sf"/>
</dbReference>
<dbReference type="InterPro" id="IPR050057">
    <property type="entry name" value="Prokaryotic/Mito_RF"/>
</dbReference>
<dbReference type="InterPro" id="IPR004373">
    <property type="entry name" value="RF-1"/>
</dbReference>
<dbReference type="NCBIfam" id="TIGR00019">
    <property type="entry name" value="prfA"/>
    <property type="match status" value="1"/>
</dbReference>
<dbReference type="NCBIfam" id="NF001859">
    <property type="entry name" value="PRK00591.1"/>
    <property type="match status" value="1"/>
</dbReference>
<dbReference type="PANTHER" id="PTHR43804">
    <property type="entry name" value="LD18447P"/>
    <property type="match status" value="1"/>
</dbReference>
<dbReference type="PANTHER" id="PTHR43804:SF7">
    <property type="entry name" value="LD18447P"/>
    <property type="match status" value="1"/>
</dbReference>
<dbReference type="Pfam" id="PF03462">
    <property type="entry name" value="PCRF"/>
    <property type="match status" value="1"/>
</dbReference>
<dbReference type="Pfam" id="PF00472">
    <property type="entry name" value="RF-1"/>
    <property type="match status" value="1"/>
</dbReference>
<dbReference type="SMART" id="SM00937">
    <property type="entry name" value="PCRF"/>
    <property type="match status" value="1"/>
</dbReference>
<dbReference type="SUPFAM" id="SSF75620">
    <property type="entry name" value="Release factor"/>
    <property type="match status" value="1"/>
</dbReference>
<dbReference type="PROSITE" id="PS00745">
    <property type="entry name" value="RF_PROK_I"/>
    <property type="match status" value="1"/>
</dbReference>
<keyword id="KW-0963">Cytoplasm</keyword>
<keyword id="KW-0488">Methylation</keyword>
<keyword id="KW-0648">Protein biosynthesis</keyword>
<keyword id="KW-1185">Reference proteome</keyword>
<gene>
    <name evidence="1" type="primary">prfA</name>
    <name type="ordered locus">Pnuc_0136</name>
</gene>
<protein>
    <recommendedName>
        <fullName evidence="1">Peptide chain release factor 1</fullName>
        <shortName evidence="1">RF-1</shortName>
    </recommendedName>
</protein>
<name>RF1_POLAQ</name>
<evidence type="ECO:0000255" key="1">
    <source>
        <dbReference type="HAMAP-Rule" id="MF_00093"/>
    </source>
</evidence>